<keyword id="KW-0113">Calvin cycle</keyword>
<keyword id="KW-0120">Carbon dioxide fixation</keyword>
<keyword id="KW-0150">Chloroplast</keyword>
<keyword id="KW-1015">Disulfide bond</keyword>
<keyword id="KW-0456">Lyase</keyword>
<keyword id="KW-0460">Magnesium</keyword>
<keyword id="KW-0479">Metal-binding</keyword>
<keyword id="KW-0503">Monooxygenase</keyword>
<keyword id="KW-0560">Oxidoreductase</keyword>
<keyword id="KW-0601">Photorespiration</keyword>
<keyword id="KW-0602">Photosynthesis</keyword>
<keyword id="KW-0934">Plastid</keyword>
<geneLocation type="chloroplast"/>
<protein>
    <recommendedName>
        <fullName evidence="1">Ribulose bisphosphate carboxylase large chain</fullName>
        <shortName evidence="1">RuBisCO large subunit</shortName>
        <ecNumber evidence="1">4.1.1.39</ecNumber>
    </recommendedName>
</protein>
<name>RBL_BUDDA</name>
<feature type="chain" id="PRO_0000062383" description="Ribulose bisphosphate carboxylase large chain">
    <location>
        <begin position="1" status="less than"/>
        <end position="443"/>
    </location>
</feature>
<feature type="active site" description="Proton acceptor" evidence="1">
    <location>
        <position position="141"/>
    </location>
</feature>
<feature type="active site" description="Proton acceptor" evidence="1">
    <location>
        <position position="260"/>
    </location>
</feature>
<feature type="binding site" description="in homodimeric partner" evidence="1">
    <location>
        <position position="89"/>
    </location>
    <ligand>
        <name>substrate</name>
    </ligand>
</feature>
<feature type="binding site" evidence="1">
    <location>
        <position position="139"/>
    </location>
    <ligand>
        <name>substrate</name>
    </ligand>
</feature>
<feature type="binding site" evidence="1">
    <location>
        <position position="143"/>
    </location>
    <ligand>
        <name>substrate</name>
    </ligand>
</feature>
<feature type="binding site" description="via carbamate group" evidence="1">
    <location>
        <position position="167"/>
    </location>
    <ligand>
        <name>Mg(2+)</name>
        <dbReference type="ChEBI" id="CHEBI:18420"/>
    </ligand>
</feature>
<feature type="binding site" evidence="1">
    <location>
        <position position="169"/>
    </location>
    <ligand>
        <name>Mg(2+)</name>
        <dbReference type="ChEBI" id="CHEBI:18420"/>
    </ligand>
</feature>
<feature type="binding site" evidence="1">
    <location>
        <position position="170"/>
    </location>
    <ligand>
        <name>Mg(2+)</name>
        <dbReference type="ChEBI" id="CHEBI:18420"/>
    </ligand>
</feature>
<feature type="binding site" evidence="1">
    <location>
        <position position="261"/>
    </location>
    <ligand>
        <name>substrate</name>
    </ligand>
</feature>
<feature type="binding site" evidence="1">
    <location>
        <position position="293"/>
    </location>
    <ligand>
        <name>substrate</name>
    </ligand>
</feature>
<feature type="binding site" evidence="1">
    <location>
        <position position="345"/>
    </location>
    <ligand>
        <name>substrate</name>
    </ligand>
</feature>
<feature type="site" description="Transition state stabilizer" evidence="1">
    <location>
        <position position="300"/>
    </location>
</feature>
<feature type="modified residue" description="N6-carboxylysine" evidence="1">
    <location>
        <position position="167"/>
    </location>
</feature>
<feature type="disulfide bond" description="Interchain; in linked form" evidence="1">
    <location>
        <position position="213"/>
    </location>
</feature>
<feature type="non-terminal residue">
    <location>
        <position position="1"/>
    </location>
</feature>
<gene>
    <name evidence="1" type="primary">rbcL</name>
</gene>
<organism>
    <name type="scientific">Buddleja davidii</name>
    <name type="common">Butterfly bush</name>
    <dbReference type="NCBI Taxonomy" id="28540"/>
    <lineage>
        <taxon>Eukaryota</taxon>
        <taxon>Viridiplantae</taxon>
        <taxon>Streptophyta</taxon>
        <taxon>Embryophyta</taxon>
        <taxon>Tracheophyta</taxon>
        <taxon>Spermatophyta</taxon>
        <taxon>Magnoliopsida</taxon>
        <taxon>eudicotyledons</taxon>
        <taxon>Gunneridae</taxon>
        <taxon>Pentapetalae</taxon>
        <taxon>asterids</taxon>
        <taxon>lamiids</taxon>
        <taxon>Lamiales</taxon>
        <taxon>Scrophulariaceae</taxon>
        <taxon>Buddlejeae</taxon>
        <taxon>Buddleja</taxon>
    </lineage>
</organism>
<evidence type="ECO:0000255" key="1">
    <source>
        <dbReference type="HAMAP-Rule" id="MF_01338"/>
    </source>
</evidence>
<reference key="1">
    <citation type="journal article" date="1993" name="Ann. Mo. Bot. Gard.">
        <title>A parsimony analysis of the Asteridae sensu lato based on rbcL sequences.</title>
        <authorList>
            <person name="Olmstead R.G."/>
            <person name="Bremer B."/>
            <person name="Scott K.M."/>
            <person name="Palmer J.D."/>
        </authorList>
        <dbReference type="AGRICOLA" id="IND93053816"/>
    </citation>
    <scope>NUCLEOTIDE SEQUENCE [GENOMIC DNA]</scope>
</reference>
<dbReference type="EC" id="4.1.1.39" evidence="1"/>
<dbReference type="EMBL" id="L14392">
    <property type="protein sequence ID" value="AAA19760.1"/>
    <property type="molecule type" value="Genomic_DNA"/>
</dbReference>
<dbReference type="SMR" id="P36482"/>
<dbReference type="GO" id="GO:0009507">
    <property type="term" value="C:chloroplast"/>
    <property type="evidence" value="ECO:0007669"/>
    <property type="project" value="UniProtKB-SubCell"/>
</dbReference>
<dbReference type="GO" id="GO:0000287">
    <property type="term" value="F:magnesium ion binding"/>
    <property type="evidence" value="ECO:0007669"/>
    <property type="project" value="InterPro"/>
</dbReference>
<dbReference type="GO" id="GO:0004497">
    <property type="term" value="F:monooxygenase activity"/>
    <property type="evidence" value="ECO:0007669"/>
    <property type="project" value="UniProtKB-KW"/>
</dbReference>
<dbReference type="GO" id="GO:0016984">
    <property type="term" value="F:ribulose-bisphosphate carboxylase activity"/>
    <property type="evidence" value="ECO:0007669"/>
    <property type="project" value="UniProtKB-EC"/>
</dbReference>
<dbReference type="GO" id="GO:0009853">
    <property type="term" value="P:photorespiration"/>
    <property type="evidence" value="ECO:0007669"/>
    <property type="project" value="UniProtKB-KW"/>
</dbReference>
<dbReference type="GO" id="GO:0019253">
    <property type="term" value="P:reductive pentose-phosphate cycle"/>
    <property type="evidence" value="ECO:0007669"/>
    <property type="project" value="UniProtKB-KW"/>
</dbReference>
<dbReference type="CDD" id="cd08212">
    <property type="entry name" value="RuBisCO_large_I"/>
    <property type="match status" value="1"/>
</dbReference>
<dbReference type="FunFam" id="3.20.20.110:FF:000001">
    <property type="entry name" value="Ribulose bisphosphate carboxylase large chain"/>
    <property type="match status" value="1"/>
</dbReference>
<dbReference type="Gene3D" id="3.20.20.110">
    <property type="entry name" value="Ribulose bisphosphate carboxylase, large subunit, C-terminal domain"/>
    <property type="match status" value="1"/>
</dbReference>
<dbReference type="Gene3D" id="3.30.70.150">
    <property type="entry name" value="RuBisCO large subunit, N-terminal domain"/>
    <property type="match status" value="1"/>
</dbReference>
<dbReference type="HAMAP" id="MF_01338">
    <property type="entry name" value="RuBisCO_L_type1"/>
    <property type="match status" value="1"/>
</dbReference>
<dbReference type="InterPro" id="IPR033966">
    <property type="entry name" value="RuBisCO"/>
</dbReference>
<dbReference type="InterPro" id="IPR020878">
    <property type="entry name" value="RuBisCo_large_chain_AS"/>
</dbReference>
<dbReference type="InterPro" id="IPR000685">
    <property type="entry name" value="RuBisCO_lsu_C"/>
</dbReference>
<dbReference type="InterPro" id="IPR036376">
    <property type="entry name" value="RuBisCO_lsu_C_sf"/>
</dbReference>
<dbReference type="InterPro" id="IPR017443">
    <property type="entry name" value="RuBisCO_lsu_fd_N"/>
</dbReference>
<dbReference type="InterPro" id="IPR036422">
    <property type="entry name" value="RuBisCO_lsu_N_sf"/>
</dbReference>
<dbReference type="InterPro" id="IPR020888">
    <property type="entry name" value="RuBisCO_lsuI"/>
</dbReference>
<dbReference type="NCBIfam" id="NF003252">
    <property type="entry name" value="PRK04208.1"/>
    <property type="match status" value="1"/>
</dbReference>
<dbReference type="PANTHER" id="PTHR42704">
    <property type="entry name" value="RIBULOSE BISPHOSPHATE CARBOXYLASE"/>
    <property type="match status" value="1"/>
</dbReference>
<dbReference type="PANTHER" id="PTHR42704:SF15">
    <property type="entry name" value="RIBULOSE BISPHOSPHATE CARBOXYLASE LARGE CHAIN"/>
    <property type="match status" value="1"/>
</dbReference>
<dbReference type="Pfam" id="PF00016">
    <property type="entry name" value="RuBisCO_large"/>
    <property type="match status" value="1"/>
</dbReference>
<dbReference type="Pfam" id="PF02788">
    <property type="entry name" value="RuBisCO_large_N"/>
    <property type="match status" value="1"/>
</dbReference>
<dbReference type="SFLD" id="SFLDG01052">
    <property type="entry name" value="RuBisCO"/>
    <property type="match status" value="1"/>
</dbReference>
<dbReference type="SFLD" id="SFLDS00014">
    <property type="entry name" value="RuBisCO"/>
    <property type="match status" value="1"/>
</dbReference>
<dbReference type="SFLD" id="SFLDG00301">
    <property type="entry name" value="RuBisCO-like_proteins"/>
    <property type="match status" value="1"/>
</dbReference>
<dbReference type="SUPFAM" id="SSF51649">
    <property type="entry name" value="RuBisCo, C-terminal domain"/>
    <property type="match status" value="1"/>
</dbReference>
<dbReference type="SUPFAM" id="SSF54966">
    <property type="entry name" value="RuBisCO, large subunit, small (N-terminal) domain"/>
    <property type="match status" value="1"/>
</dbReference>
<dbReference type="PROSITE" id="PS00157">
    <property type="entry name" value="RUBISCO_LARGE"/>
    <property type="match status" value="1"/>
</dbReference>
<sequence length="443" mass="48936">DILAAFRVTPQPGVPPEEAGAAVAAESSTGTWTTVWTDGLTSLDRYKGRCYHIEPVPGETDQYICYVAYPLDLFEEGSVTNMFTSIVGNVFGFKALRALRLEDLRIPPAYIKTFQGPPHGVQVERDKLNKYGRPLLGCTIKPKLGLSAKNYGRAVYECLRGGLDFTKDDENVNSQPFMRWRDRFLFCAEALYKAQAETGEIKGHYLNATAGTCEEMIKRAVFARELGVPIVMHDYLTGGFTANTSLAHYCRDNGLLLHIHRAMHAVIDRQKNHGIHFRVLAKALRMSGGDHIHSGTVVGKLEGERDITLGFVDLLRDDFIEKDRSRGIYFTQDWVSLPGVIPVASGGIHVWHMPALTEIFGDDSVLQFGGGTLGHPWGNAPGAVANRVALEACVQARNEGRDLAAEGNAIIREASKWSPELAAACEVWKEIKFEFKAVDTLDK</sequence>
<comment type="function">
    <text evidence="1">RuBisCO catalyzes two reactions: the carboxylation of D-ribulose 1,5-bisphosphate, the primary event in carbon dioxide fixation, as well as the oxidative fragmentation of the pentose substrate in the photorespiration process. Both reactions occur simultaneously and in competition at the same active site.</text>
</comment>
<comment type="catalytic activity">
    <reaction evidence="1">
        <text>2 (2R)-3-phosphoglycerate + 2 H(+) = D-ribulose 1,5-bisphosphate + CO2 + H2O</text>
        <dbReference type="Rhea" id="RHEA:23124"/>
        <dbReference type="ChEBI" id="CHEBI:15377"/>
        <dbReference type="ChEBI" id="CHEBI:15378"/>
        <dbReference type="ChEBI" id="CHEBI:16526"/>
        <dbReference type="ChEBI" id="CHEBI:57870"/>
        <dbReference type="ChEBI" id="CHEBI:58272"/>
        <dbReference type="EC" id="4.1.1.39"/>
    </reaction>
</comment>
<comment type="catalytic activity">
    <reaction evidence="1">
        <text>D-ribulose 1,5-bisphosphate + O2 = 2-phosphoglycolate + (2R)-3-phosphoglycerate + 2 H(+)</text>
        <dbReference type="Rhea" id="RHEA:36631"/>
        <dbReference type="ChEBI" id="CHEBI:15378"/>
        <dbReference type="ChEBI" id="CHEBI:15379"/>
        <dbReference type="ChEBI" id="CHEBI:57870"/>
        <dbReference type="ChEBI" id="CHEBI:58033"/>
        <dbReference type="ChEBI" id="CHEBI:58272"/>
    </reaction>
</comment>
<comment type="cofactor">
    <cofactor evidence="1">
        <name>Mg(2+)</name>
        <dbReference type="ChEBI" id="CHEBI:18420"/>
    </cofactor>
    <text evidence="1">Binds 1 Mg(2+) ion per subunit.</text>
</comment>
<comment type="subunit">
    <text evidence="1">Heterohexadecamer of 8 large chains and 8 small chains; disulfide-linked. The disulfide link is formed within the large subunit homodimers.</text>
</comment>
<comment type="subcellular location">
    <subcellularLocation>
        <location>Plastid</location>
        <location>Chloroplast</location>
    </subcellularLocation>
</comment>
<comment type="PTM">
    <text evidence="1">The disulfide bond which can form in the large chain dimeric partners within the hexadecamer appears to be associated with oxidative stress and protein turnover.</text>
</comment>
<comment type="miscellaneous">
    <text evidence="1">The basic functional RuBisCO is composed of a large chain homodimer in a 'head-to-tail' conformation. In form I RuBisCO this homodimer is arranged in a barrel-like tetramer with the small subunits forming a tetrameric 'cap' on each end of the 'barrel'.</text>
</comment>
<comment type="similarity">
    <text evidence="1">Belongs to the RuBisCO large chain family. Type I subfamily.</text>
</comment>
<accession>P36482</accession>
<proteinExistence type="inferred from homology"/>